<evidence type="ECO:0000256" key="1">
    <source>
        <dbReference type="SAM" id="MobiDB-lite"/>
    </source>
</evidence>
<evidence type="ECO:0000269" key="2">
    <source>
    </source>
</evidence>
<evidence type="ECO:0000269" key="3">
    <source>
    </source>
</evidence>
<evidence type="ECO:0000303" key="4">
    <source>
    </source>
</evidence>
<evidence type="ECO:0000305" key="5"/>
<evidence type="ECO:0000312" key="6">
    <source>
        <dbReference type="HGNC" id="HGNC:26112"/>
    </source>
</evidence>
<comment type="function">
    <text evidence="3">Could induce apoptosis in a BH3 domain-dependent manner. The direct interaction network of Bcl-2 family members may play a key role in modulation RTL10/BOP intrinsic apoptotic signaling activity.</text>
</comment>
<comment type="subunit">
    <text evidence="3">Interacts (via BH3 domain) with VDAC1. Interacts with pro-survival Bcl-2 family members, BCL2, BCL2L1 isoform Bcl-X(L), MCL1, BCL2A1 and BCL2L2. Interacts with BAX and BAK1.</text>
</comment>
<comment type="interaction">
    <interactant intactId="EBI-10697720">
        <id>Q7L3V2</id>
    </interactant>
    <interactant intactId="EBI-519866">
        <id>Q16611</id>
        <label>BAK1</label>
    </interactant>
    <organismsDiffer>false</organismsDiffer>
    <experiments>2</experiments>
</comment>
<comment type="interaction">
    <interactant intactId="EBI-10697720">
        <id>Q7L3V2</id>
    </interactant>
    <interactant intactId="EBI-516580">
        <id>Q07812</id>
        <label>BAX</label>
    </interactant>
    <organismsDiffer>false</organismsDiffer>
    <experiments>2</experiments>
</comment>
<comment type="interaction">
    <interactant intactId="EBI-10697720">
        <id>Q7L3V2</id>
    </interactant>
    <interactant intactId="EBI-287195">
        <id>Q07817-1</id>
        <label>BCL2L1</label>
    </interactant>
    <organismsDiffer>false</organismsDiffer>
    <experiments>3</experiments>
</comment>
<comment type="interaction">
    <interactant intactId="EBI-10697720">
        <id>Q7L3V2</id>
    </interactant>
    <interactant intactId="EBI-707714">
        <id>Q92843</id>
        <label>BCL2L2</label>
    </interactant>
    <organismsDiffer>false</organismsDiffer>
    <experiments>5</experiments>
</comment>
<comment type="interaction">
    <interactant intactId="EBI-10697720">
        <id>Q7L3V2</id>
    </interactant>
    <interactant intactId="EBI-473189">
        <id>Q96D09</id>
        <label>GPRASP2</label>
    </interactant>
    <organismsDiffer>false</organismsDiffer>
    <experiments>3</experiments>
</comment>
<comment type="interaction">
    <interactant intactId="EBI-10697720">
        <id>Q7L3V2</id>
    </interactant>
    <interactant intactId="EBI-1003422">
        <id>Q07820</id>
        <label>MCL1</label>
    </interactant>
    <organismsDiffer>false</organismsDiffer>
    <experiments>2</experiments>
</comment>
<comment type="interaction">
    <interactant intactId="EBI-10697720">
        <id>Q7L3V2</id>
    </interactant>
    <interactant intactId="EBI-354158">
        <id>P21796</id>
        <label>VDAC1</label>
    </interactant>
    <organismsDiffer>false</organismsDiffer>
    <experiments>2</experiments>
</comment>
<comment type="subcellular location">
    <subcellularLocation>
        <location evidence="3">Mitochondrion</location>
    </subcellularLocation>
</comment>
<comment type="tissue specificity">
    <text evidence="3">Ubiquitously expressed.</text>
</comment>
<comment type="domain">
    <text evidence="3">The BH3 motif is required for pro-apoptotic activity and for interaction with pro-survival Bcl-2 family members.</text>
</comment>
<comment type="sequence caution" evidence="5">
    <conflict type="erroneous initiation">
        <sequence resource="EMBL-CDS" id="BAB14998"/>
    </conflict>
    <text>Truncated N-terminus.</text>
</comment>
<feature type="chain" id="PRO_0000295910" description="Protein Bop">
    <location>
        <begin position="1"/>
        <end position="364"/>
    </location>
</feature>
<feature type="region of interest" description="Disordered" evidence="1">
    <location>
        <begin position="66"/>
        <end position="88"/>
    </location>
</feature>
<feature type="region of interest" description="Disordered" evidence="1">
    <location>
        <begin position="258"/>
        <end position="364"/>
    </location>
</feature>
<feature type="short sequence motif" description="BH3">
    <location>
        <begin position="114"/>
        <end position="128"/>
    </location>
</feature>
<feature type="compositionally biased region" description="Pro residues" evidence="1">
    <location>
        <begin position="311"/>
        <end position="322"/>
    </location>
</feature>
<feature type="compositionally biased region" description="Pro residues" evidence="1">
    <location>
        <begin position="355"/>
        <end position="364"/>
    </location>
</feature>
<feature type="sequence variant" id="VAR_034590" description="In dbSNP:rs17745302.">
    <original>R</original>
    <variation>H</variation>
    <location>
        <position position="116"/>
    </location>
</feature>
<feature type="sequence variant" id="VAR_034591" description="In dbSNP:rs34027839." evidence="2">
    <original>D</original>
    <variation>Y</variation>
    <location>
        <position position="123"/>
    </location>
</feature>
<feature type="mutagenesis site" description="Reduces the pro-apoptotic activity and interaction with VDAC1." evidence="3">
    <original>L</original>
    <variation>A</variation>
    <location>
        <position position="118"/>
    </location>
</feature>
<feature type="mutagenesis site" description="No effect on interaction with VDAC1." evidence="3">
    <original>Q</original>
    <variation>A</variation>
    <location>
        <position position="120"/>
    </location>
</feature>
<feature type="mutagenesis site" description="No effect on interaction with VDAC1." evidence="3">
    <original>G</original>
    <variation>A</variation>
    <location>
        <position position="122"/>
    </location>
</feature>
<feature type="mutagenesis site" description="Reduces the pro-apoptotic activity, no effect on interaction with VDAC1." evidence="3">
    <original>D</original>
    <variation>A</variation>
    <location>
        <position position="123"/>
    </location>
</feature>
<feature type="sequence conflict" description="In Ref. 1; BAF83951." evidence="5" ref="1">
    <original>Y</original>
    <variation>H</variation>
    <location>
        <position position="124"/>
    </location>
</feature>
<feature type="sequence conflict" description="In Ref. 2; CAE45984/CAE46001." evidence="5" ref="2">
    <original>A</original>
    <variation>V</variation>
    <location>
        <position position="206"/>
    </location>
</feature>
<dbReference type="EMBL" id="AK291262">
    <property type="protein sequence ID" value="BAF83951.1"/>
    <property type="molecule type" value="mRNA"/>
</dbReference>
<dbReference type="EMBL" id="BX640785">
    <property type="protein sequence ID" value="CAE45875.1"/>
    <property type="molecule type" value="mRNA"/>
</dbReference>
<dbReference type="EMBL" id="BX640969">
    <property type="protein sequence ID" value="CAE45984.1"/>
    <property type="molecule type" value="mRNA"/>
</dbReference>
<dbReference type="EMBL" id="BX640998">
    <property type="protein sequence ID" value="CAE46001.1"/>
    <property type="molecule type" value="mRNA"/>
</dbReference>
<dbReference type="EMBL" id="AC000076">
    <property type="status" value="NOT_ANNOTATED_CDS"/>
    <property type="molecule type" value="Genomic_DNA"/>
</dbReference>
<dbReference type="EMBL" id="CH471176">
    <property type="protein sequence ID" value="EAX03018.1"/>
    <property type="molecule type" value="Genomic_DNA"/>
</dbReference>
<dbReference type="EMBL" id="CH471176">
    <property type="protein sequence ID" value="EAX03019.1"/>
    <property type="molecule type" value="Genomic_DNA"/>
</dbReference>
<dbReference type="EMBL" id="BC011679">
    <property type="protein sequence ID" value="AAH11679.2"/>
    <property type="molecule type" value="mRNA"/>
</dbReference>
<dbReference type="EMBL" id="AK024778">
    <property type="protein sequence ID" value="BAB14998.1"/>
    <property type="status" value="ALT_INIT"/>
    <property type="molecule type" value="mRNA"/>
</dbReference>
<dbReference type="CCDS" id="CCDS13769.1"/>
<dbReference type="RefSeq" id="NP_078903.3">
    <property type="nucleotide sequence ID" value="NM_024627.5"/>
</dbReference>
<dbReference type="BioGRID" id="122804">
    <property type="interactions" value="19"/>
</dbReference>
<dbReference type="FunCoup" id="Q7L3V2">
    <property type="interactions" value="50"/>
</dbReference>
<dbReference type="IntAct" id="Q7L3V2">
    <property type="interactions" value="18"/>
</dbReference>
<dbReference type="STRING" id="9606.ENSP00000384924"/>
<dbReference type="GlyGen" id="Q7L3V2">
    <property type="glycosylation" value="3 sites, 1 O-linked glycan (2 sites)"/>
</dbReference>
<dbReference type="iPTMnet" id="Q7L3V2"/>
<dbReference type="PhosphoSitePlus" id="Q7L3V2"/>
<dbReference type="BioMuta" id="RTL10"/>
<dbReference type="DMDM" id="74739166"/>
<dbReference type="jPOST" id="Q7L3V2"/>
<dbReference type="MassIVE" id="Q7L3V2"/>
<dbReference type="PaxDb" id="9606-ENSP00000384924"/>
<dbReference type="PeptideAtlas" id="Q7L3V2"/>
<dbReference type="ProteomicsDB" id="68773"/>
<dbReference type="Pumba" id="Q7L3V2"/>
<dbReference type="Antibodypedia" id="201">
    <property type="antibodies" value="20 antibodies from 9 providers"/>
</dbReference>
<dbReference type="DNASU" id="79680"/>
<dbReference type="Ensembl" id="ENST00000328554.9">
    <property type="protein sequence ID" value="ENSP00000330596.4"/>
    <property type="gene ID" value="ENSG00000215012.9"/>
</dbReference>
<dbReference type="Ensembl" id="ENST00000405640.1">
    <property type="protein sequence ID" value="ENSP00000384924.1"/>
    <property type="gene ID" value="ENSG00000215012.9"/>
</dbReference>
<dbReference type="Ensembl" id="ENST00000407472.5">
    <property type="protein sequence ID" value="ENSP00000386111.1"/>
    <property type="gene ID" value="ENSG00000215012.9"/>
</dbReference>
<dbReference type="GeneID" id="79680"/>
<dbReference type="KEGG" id="hsa:79680"/>
<dbReference type="MANE-Select" id="ENST00000328554.9">
    <property type="protein sequence ID" value="ENSP00000330596.4"/>
    <property type="RefSeq nucleotide sequence ID" value="NM_024627.6"/>
    <property type="RefSeq protein sequence ID" value="NP_078903.3"/>
</dbReference>
<dbReference type="UCSC" id="uc002zqg.4">
    <property type="organism name" value="human"/>
</dbReference>
<dbReference type="AGR" id="HGNC:26112"/>
<dbReference type="CTD" id="79680"/>
<dbReference type="DisGeNET" id="79680"/>
<dbReference type="GeneCards" id="RTL10"/>
<dbReference type="HGNC" id="HGNC:26112">
    <property type="gene designation" value="RTL10"/>
</dbReference>
<dbReference type="HPA" id="ENSG00000215012">
    <property type="expression patterns" value="Low tissue specificity"/>
</dbReference>
<dbReference type="MIM" id="620751">
    <property type="type" value="gene"/>
</dbReference>
<dbReference type="neXtProt" id="NX_Q7L3V2"/>
<dbReference type="OpenTargets" id="ENSG00000215012"/>
<dbReference type="PharmGKB" id="PA145149415"/>
<dbReference type="VEuPathDB" id="HostDB:ENSG00000215012"/>
<dbReference type="eggNOG" id="ENOG502TE0G">
    <property type="taxonomic scope" value="Eukaryota"/>
</dbReference>
<dbReference type="GeneTree" id="ENSGT00940000166811"/>
<dbReference type="HOGENOM" id="CLU_801582_0_0_1"/>
<dbReference type="InParanoid" id="Q7L3V2"/>
<dbReference type="OMA" id="QGPRNPI"/>
<dbReference type="OrthoDB" id="9800257at2759"/>
<dbReference type="PAN-GO" id="Q7L3V2">
    <property type="GO annotations" value="1 GO annotation based on evolutionary models"/>
</dbReference>
<dbReference type="PhylomeDB" id="Q7L3V2"/>
<dbReference type="TreeFam" id="TF342426"/>
<dbReference type="PathwayCommons" id="Q7L3V2"/>
<dbReference type="SignaLink" id="Q7L3V2"/>
<dbReference type="BioGRID-ORCS" id="79680">
    <property type="hits" value="19 hits in 1130 CRISPR screens"/>
</dbReference>
<dbReference type="GenomeRNAi" id="79680"/>
<dbReference type="Pharos" id="Q7L3V2">
    <property type="development level" value="Tbio"/>
</dbReference>
<dbReference type="PRO" id="PR:Q7L3V2"/>
<dbReference type="Proteomes" id="UP000005640">
    <property type="component" value="Chromosome 22"/>
</dbReference>
<dbReference type="RNAct" id="Q7L3V2">
    <property type="molecule type" value="protein"/>
</dbReference>
<dbReference type="Bgee" id="ENSG00000215012">
    <property type="expression patterns" value="Expressed in decidua and 151 other cell types or tissues"/>
</dbReference>
<dbReference type="ExpressionAtlas" id="Q7L3V2">
    <property type="expression patterns" value="baseline and differential"/>
</dbReference>
<dbReference type="GO" id="GO:0005739">
    <property type="term" value="C:mitochondrion"/>
    <property type="evidence" value="ECO:0000314"/>
    <property type="project" value="UniProtKB"/>
</dbReference>
<dbReference type="GO" id="GO:0097345">
    <property type="term" value="P:mitochondrial outer membrane permeabilization"/>
    <property type="evidence" value="ECO:0000315"/>
    <property type="project" value="UniProtKB"/>
</dbReference>
<dbReference type="GO" id="GO:0051881">
    <property type="term" value="P:regulation of mitochondrial membrane potential"/>
    <property type="evidence" value="ECO:0000315"/>
    <property type="project" value="UniProtKB"/>
</dbReference>
<dbReference type="InterPro" id="IPR032549">
    <property type="entry name" value="DUF4939"/>
</dbReference>
<dbReference type="Pfam" id="PF16297">
    <property type="entry name" value="DUF4939"/>
    <property type="match status" value="1"/>
</dbReference>
<name>BOP_HUMAN</name>
<keyword id="KW-0053">Apoptosis</keyword>
<keyword id="KW-0496">Mitochondrion</keyword>
<keyword id="KW-1267">Proteomics identification</keyword>
<keyword id="KW-1185">Reference proteome</keyword>
<accession>Q7L3V2</accession>
<accession>A8K5E7</accession>
<accession>D3DX21</accession>
<accession>Q6MZM8</accession>
<accession>Q6N000</accession>
<accession>Q9H7A0</accession>
<organism>
    <name type="scientific">Homo sapiens</name>
    <name type="common">Human</name>
    <dbReference type="NCBI Taxonomy" id="9606"/>
    <lineage>
        <taxon>Eukaryota</taxon>
        <taxon>Metazoa</taxon>
        <taxon>Chordata</taxon>
        <taxon>Craniata</taxon>
        <taxon>Vertebrata</taxon>
        <taxon>Euteleostomi</taxon>
        <taxon>Mammalia</taxon>
        <taxon>Eutheria</taxon>
        <taxon>Euarchontoglires</taxon>
        <taxon>Primates</taxon>
        <taxon>Haplorrhini</taxon>
        <taxon>Catarrhini</taxon>
        <taxon>Hominidae</taxon>
        <taxon>Homo</taxon>
    </lineage>
</organism>
<protein>
    <recommendedName>
        <fullName evidence="4">Protein Bop</fullName>
    </recommendedName>
    <alternativeName>
        <fullName>BH3-only protein</fullName>
    </alternativeName>
    <alternativeName>
        <fullName evidence="6">Retrotransposon Gag-like protein 10</fullName>
    </alternativeName>
</protein>
<sequence>MPRGRCRQQGPRIPIWAAANYANAHPWQQMDKASPGVAYTPLVDPWIERPCCGDTVCVRTTMEQKSTASGTCGGKPAERGPLAGHMPSSRPHRVDFCWVPGSDPGTFDGSPWLLDRFLAQLGDYMSFHFEHYQDNISRVCEILRRLTGRAQAWAAPYLDGDLPLPDDYELFCQDLKEVVQDPNSFAEYHAVVTCPLPLASSQLPVAPQLPVVRQYLARFLEGLALDMGTAPRSLPAAMATPAVSGSNSVSRSALFEQQLTKESTPGPKEPPVLPSSTCSSKPGPVEPASSQPEEAAPTPVPRLSESANPPAQRPDPAHPGGPKPQKTEEEVLETEGDQEVSLGTPQEVVEAPETPGEPPLSPGF</sequence>
<gene>
    <name evidence="6" type="primary">RTL10</name>
    <name type="synonym">BOP</name>
    <name type="synonym">C22orf29</name>
</gene>
<reference key="1">
    <citation type="journal article" date="2004" name="Nat. Genet.">
        <title>Complete sequencing and characterization of 21,243 full-length human cDNAs.</title>
        <authorList>
            <person name="Ota T."/>
            <person name="Suzuki Y."/>
            <person name="Nishikawa T."/>
            <person name="Otsuki T."/>
            <person name="Sugiyama T."/>
            <person name="Irie R."/>
            <person name="Wakamatsu A."/>
            <person name="Hayashi K."/>
            <person name="Sato H."/>
            <person name="Nagai K."/>
            <person name="Kimura K."/>
            <person name="Makita H."/>
            <person name="Sekine M."/>
            <person name="Obayashi M."/>
            <person name="Nishi T."/>
            <person name="Shibahara T."/>
            <person name="Tanaka T."/>
            <person name="Ishii S."/>
            <person name="Yamamoto J."/>
            <person name="Saito K."/>
            <person name="Kawai Y."/>
            <person name="Isono Y."/>
            <person name="Nakamura Y."/>
            <person name="Nagahari K."/>
            <person name="Murakami K."/>
            <person name="Yasuda T."/>
            <person name="Iwayanagi T."/>
            <person name="Wagatsuma M."/>
            <person name="Shiratori A."/>
            <person name="Sudo H."/>
            <person name="Hosoiri T."/>
            <person name="Kaku Y."/>
            <person name="Kodaira H."/>
            <person name="Kondo H."/>
            <person name="Sugawara M."/>
            <person name="Takahashi M."/>
            <person name="Kanda K."/>
            <person name="Yokoi T."/>
            <person name="Furuya T."/>
            <person name="Kikkawa E."/>
            <person name="Omura Y."/>
            <person name="Abe K."/>
            <person name="Kamihara K."/>
            <person name="Katsuta N."/>
            <person name="Sato K."/>
            <person name="Tanikawa M."/>
            <person name="Yamazaki M."/>
            <person name="Ninomiya K."/>
            <person name="Ishibashi T."/>
            <person name="Yamashita H."/>
            <person name="Murakawa K."/>
            <person name="Fujimori K."/>
            <person name="Tanai H."/>
            <person name="Kimata M."/>
            <person name="Watanabe M."/>
            <person name="Hiraoka S."/>
            <person name="Chiba Y."/>
            <person name="Ishida S."/>
            <person name="Ono Y."/>
            <person name="Takiguchi S."/>
            <person name="Watanabe S."/>
            <person name="Yosida M."/>
            <person name="Hotuta T."/>
            <person name="Kusano J."/>
            <person name="Kanehori K."/>
            <person name="Takahashi-Fujii A."/>
            <person name="Hara H."/>
            <person name="Tanase T.-O."/>
            <person name="Nomura Y."/>
            <person name="Togiya S."/>
            <person name="Komai F."/>
            <person name="Hara R."/>
            <person name="Takeuchi K."/>
            <person name="Arita M."/>
            <person name="Imose N."/>
            <person name="Musashino K."/>
            <person name="Yuuki H."/>
            <person name="Oshima A."/>
            <person name="Sasaki N."/>
            <person name="Aotsuka S."/>
            <person name="Yoshikawa Y."/>
            <person name="Matsunawa H."/>
            <person name="Ichihara T."/>
            <person name="Shiohata N."/>
            <person name="Sano S."/>
            <person name="Moriya S."/>
            <person name="Momiyama H."/>
            <person name="Satoh N."/>
            <person name="Takami S."/>
            <person name="Terashima Y."/>
            <person name="Suzuki O."/>
            <person name="Nakagawa S."/>
            <person name="Senoh A."/>
            <person name="Mizoguchi H."/>
            <person name="Goto Y."/>
            <person name="Shimizu F."/>
            <person name="Wakebe H."/>
            <person name="Hishigaki H."/>
            <person name="Watanabe T."/>
            <person name="Sugiyama A."/>
            <person name="Takemoto M."/>
            <person name="Kawakami B."/>
            <person name="Yamazaki M."/>
            <person name="Watanabe K."/>
            <person name="Kumagai A."/>
            <person name="Itakura S."/>
            <person name="Fukuzumi Y."/>
            <person name="Fujimori Y."/>
            <person name="Komiyama M."/>
            <person name="Tashiro H."/>
            <person name="Tanigami A."/>
            <person name="Fujiwara T."/>
            <person name="Ono T."/>
            <person name="Yamada K."/>
            <person name="Fujii Y."/>
            <person name="Ozaki K."/>
            <person name="Hirao M."/>
            <person name="Ohmori Y."/>
            <person name="Kawabata A."/>
            <person name="Hikiji T."/>
            <person name="Kobatake N."/>
            <person name="Inagaki H."/>
            <person name="Ikema Y."/>
            <person name="Okamoto S."/>
            <person name="Okitani R."/>
            <person name="Kawakami T."/>
            <person name="Noguchi S."/>
            <person name="Itoh T."/>
            <person name="Shigeta K."/>
            <person name="Senba T."/>
            <person name="Matsumura K."/>
            <person name="Nakajima Y."/>
            <person name="Mizuno T."/>
            <person name="Morinaga M."/>
            <person name="Sasaki M."/>
            <person name="Togashi T."/>
            <person name="Oyama M."/>
            <person name="Hata H."/>
            <person name="Watanabe M."/>
            <person name="Komatsu T."/>
            <person name="Mizushima-Sugano J."/>
            <person name="Satoh T."/>
            <person name="Shirai Y."/>
            <person name="Takahashi Y."/>
            <person name="Nakagawa K."/>
            <person name="Okumura K."/>
            <person name="Nagase T."/>
            <person name="Nomura N."/>
            <person name="Kikuchi H."/>
            <person name="Masuho Y."/>
            <person name="Yamashita R."/>
            <person name="Nakai K."/>
            <person name="Yada T."/>
            <person name="Nakamura Y."/>
            <person name="Ohara O."/>
            <person name="Isogai T."/>
            <person name="Sugano S."/>
        </authorList>
    </citation>
    <scope>NUCLEOTIDE SEQUENCE [LARGE SCALE MRNA]</scope>
</reference>
<reference key="2">
    <citation type="journal article" date="2007" name="BMC Genomics">
        <title>The full-ORF clone resource of the German cDNA consortium.</title>
        <authorList>
            <person name="Bechtel S."/>
            <person name="Rosenfelder H."/>
            <person name="Duda A."/>
            <person name="Schmidt C.P."/>
            <person name="Ernst U."/>
            <person name="Wellenreuther R."/>
            <person name="Mehrle A."/>
            <person name="Schuster C."/>
            <person name="Bahr A."/>
            <person name="Bloecker H."/>
            <person name="Heubner D."/>
            <person name="Hoerlein A."/>
            <person name="Michel G."/>
            <person name="Wedler H."/>
            <person name="Koehrer K."/>
            <person name="Ottenwaelder B."/>
            <person name="Poustka A."/>
            <person name="Wiemann S."/>
            <person name="Schupp I."/>
        </authorList>
    </citation>
    <scope>NUCLEOTIDE SEQUENCE [LARGE SCALE MRNA]</scope>
    <scope>VARIANT TYR-123</scope>
    <source>
        <tissue>Endometrial tumor</tissue>
        <tissue>Uterine endothelium</tissue>
    </source>
</reference>
<reference key="3">
    <citation type="journal article" date="1999" name="Nature">
        <title>The DNA sequence of human chromosome 22.</title>
        <authorList>
            <person name="Dunham I."/>
            <person name="Hunt A.R."/>
            <person name="Collins J.E."/>
            <person name="Bruskiewich R."/>
            <person name="Beare D.M."/>
            <person name="Clamp M."/>
            <person name="Smink L.J."/>
            <person name="Ainscough R."/>
            <person name="Almeida J.P."/>
            <person name="Babbage A.K."/>
            <person name="Bagguley C."/>
            <person name="Bailey J."/>
            <person name="Barlow K.F."/>
            <person name="Bates K.N."/>
            <person name="Beasley O.P."/>
            <person name="Bird C.P."/>
            <person name="Blakey S.E."/>
            <person name="Bridgeman A.M."/>
            <person name="Buck D."/>
            <person name="Burgess J."/>
            <person name="Burrill W.D."/>
            <person name="Burton J."/>
            <person name="Carder C."/>
            <person name="Carter N.P."/>
            <person name="Chen Y."/>
            <person name="Clark G."/>
            <person name="Clegg S.M."/>
            <person name="Cobley V.E."/>
            <person name="Cole C.G."/>
            <person name="Collier R.E."/>
            <person name="Connor R."/>
            <person name="Conroy D."/>
            <person name="Corby N.R."/>
            <person name="Coville G.J."/>
            <person name="Cox A.V."/>
            <person name="Davis J."/>
            <person name="Dawson E."/>
            <person name="Dhami P.D."/>
            <person name="Dockree C."/>
            <person name="Dodsworth S.J."/>
            <person name="Durbin R.M."/>
            <person name="Ellington A.G."/>
            <person name="Evans K.L."/>
            <person name="Fey J.M."/>
            <person name="Fleming K."/>
            <person name="French L."/>
            <person name="Garner A.A."/>
            <person name="Gilbert J.G.R."/>
            <person name="Goward M.E."/>
            <person name="Grafham D.V."/>
            <person name="Griffiths M.N.D."/>
            <person name="Hall C."/>
            <person name="Hall R.E."/>
            <person name="Hall-Tamlyn G."/>
            <person name="Heathcott R.W."/>
            <person name="Ho S."/>
            <person name="Holmes S."/>
            <person name="Hunt S.E."/>
            <person name="Jones M.C."/>
            <person name="Kershaw J."/>
            <person name="Kimberley A.M."/>
            <person name="King A."/>
            <person name="Laird G.K."/>
            <person name="Langford C.F."/>
            <person name="Leversha M.A."/>
            <person name="Lloyd C."/>
            <person name="Lloyd D.M."/>
            <person name="Martyn I.D."/>
            <person name="Mashreghi-Mohammadi M."/>
            <person name="Matthews L.H."/>
            <person name="Mccann O.T."/>
            <person name="Mcclay J."/>
            <person name="Mclaren S."/>
            <person name="McMurray A.A."/>
            <person name="Milne S.A."/>
            <person name="Mortimore B.J."/>
            <person name="Odell C.N."/>
            <person name="Pavitt R."/>
            <person name="Pearce A.V."/>
            <person name="Pearson D."/>
            <person name="Phillimore B.J.C.T."/>
            <person name="Phillips S.H."/>
            <person name="Plumb R.W."/>
            <person name="Ramsay H."/>
            <person name="Ramsey Y."/>
            <person name="Rogers L."/>
            <person name="Ross M.T."/>
            <person name="Scott C.E."/>
            <person name="Sehra H.K."/>
            <person name="Skuce C.D."/>
            <person name="Smalley S."/>
            <person name="Smith M.L."/>
            <person name="Soderlund C."/>
            <person name="Spragon L."/>
            <person name="Steward C.A."/>
            <person name="Sulston J.E."/>
            <person name="Swann R.M."/>
            <person name="Vaudin M."/>
            <person name="Wall M."/>
            <person name="Wallis J.M."/>
            <person name="Whiteley M.N."/>
            <person name="Willey D.L."/>
            <person name="Williams L."/>
            <person name="Williams S.A."/>
            <person name="Williamson H."/>
            <person name="Wilmer T.E."/>
            <person name="Wilming L."/>
            <person name="Wright C.L."/>
            <person name="Hubbard T."/>
            <person name="Bentley D.R."/>
            <person name="Beck S."/>
            <person name="Rogers J."/>
            <person name="Shimizu N."/>
            <person name="Minoshima S."/>
            <person name="Kawasaki K."/>
            <person name="Sasaki T."/>
            <person name="Asakawa S."/>
            <person name="Kudoh J."/>
            <person name="Shintani A."/>
            <person name="Shibuya K."/>
            <person name="Yoshizaki Y."/>
            <person name="Aoki N."/>
            <person name="Mitsuyama S."/>
            <person name="Roe B.A."/>
            <person name="Chen F."/>
            <person name="Chu L."/>
            <person name="Crabtree J."/>
            <person name="Deschamps S."/>
            <person name="Do A."/>
            <person name="Do T."/>
            <person name="Dorman A."/>
            <person name="Fang F."/>
            <person name="Fu Y."/>
            <person name="Hu P."/>
            <person name="Hua A."/>
            <person name="Kenton S."/>
            <person name="Lai H."/>
            <person name="Lao H.I."/>
            <person name="Lewis J."/>
            <person name="Lewis S."/>
            <person name="Lin S.-P."/>
            <person name="Loh P."/>
            <person name="Malaj E."/>
            <person name="Nguyen T."/>
            <person name="Pan H."/>
            <person name="Phan S."/>
            <person name="Qi S."/>
            <person name="Qian Y."/>
            <person name="Ray L."/>
            <person name="Ren Q."/>
            <person name="Shaull S."/>
            <person name="Sloan D."/>
            <person name="Song L."/>
            <person name="Wang Q."/>
            <person name="Wang Y."/>
            <person name="Wang Z."/>
            <person name="White J."/>
            <person name="Willingham D."/>
            <person name="Wu H."/>
            <person name="Yao Z."/>
            <person name="Zhan M."/>
            <person name="Zhang G."/>
            <person name="Chissoe S."/>
            <person name="Murray J."/>
            <person name="Miller N."/>
            <person name="Minx P."/>
            <person name="Fulton R."/>
            <person name="Johnson D."/>
            <person name="Bemis G."/>
            <person name="Bentley D."/>
            <person name="Bradshaw H."/>
            <person name="Bourne S."/>
            <person name="Cordes M."/>
            <person name="Du Z."/>
            <person name="Fulton L."/>
            <person name="Goela D."/>
            <person name="Graves T."/>
            <person name="Hawkins J."/>
            <person name="Hinds K."/>
            <person name="Kemp K."/>
            <person name="Latreille P."/>
            <person name="Layman D."/>
            <person name="Ozersky P."/>
            <person name="Rohlfing T."/>
            <person name="Scheet P."/>
            <person name="Walker C."/>
            <person name="Wamsley A."/>
            <person name="Wohldmann P."/>
            <person name="Pepin K."/>
            <person name="Nelson J."/>
            <person name="Korf I."/>
            <person name="Bedell J.A."/>
            <person name="Hillier L.W."/>
            <person name="Mardis E."/>
            <person name="Waterston R."/>
            <person name="Wilson R."/>
            <person name="Emanuel B.S."/>
            <person name="Shaikh T."/>
            <person name="Kurahashi H."/>
            <person name="Saitta S."/>
            <person name="Budarf M.L."/>
            <person name="McDermid H.E."/>
            <person name="Johnson A."/>
            <person name="Wong A.C.C."/>
            <person name="Morrow B.E."/>
            <person name="Edelmann L."/>
            <person name="Kim U.J."/>
            <person name="Shizuya H."/>
            <person name="Simon M.I."/>
            <person name="Dumanski J.P."/>
            <person name="Peyrard M."/>
            <person name="Kedra D."/>
            <person name="Seroussi E."/>
            <person name="Fransson I."/>
            <person name="Tapia I."/>
            <person name="Bruder C.E."/>
            <person name="O'Brien K.P."/>
            <person name="Wilkinson P."/>
            <person name="Bodenteich A."/>
            <person name="Hartman K."/>
            <person name="Hu X."/>
            <person name="Khan A.S."/>
            <person name="Lane L."/>
            <person name="Tilahun Y."/>
            <person name="Wright H."/>
        </authorList>
    </citation>
    <scope>NUCLEOTIDE SEQUENCE [LARGE SCALE GENOMIC DNA]</scope>
</reference>
<reference key="4">
    <citation type="submission" date="2005-09" db="EMBL/GenBank/DDBJ databases">
        <authorList>
            <person name="Mural R.J."/>
            <person name="Istrail S."/>
            <person name="Sutton G.G."/>
            <person name="Florea L."/>
            <person name="Halpern A.L."/>
            <person name="Mobarry C.M."/>
            <person name="Lippert R."/>
            <person name="Walenz B."/>
            <person name="Shatkay H."/>
            <person name="Dew I."/>
            <person name="Miller J.R."/>
            <person name="Flanigan M.J."/>
            <person name="Edwards N.J."/>
            <person name="Bolanos R."/>
            <person name="Fasulo D."/>
            <person name="Halldorsson B.V."/>
            <person name="Hannenhalli S."/>
            <person name="Turner R."/>
            <person name="Yooseph S."/>
            <person name="Lu F."/>
            <person name="Nusskern D.R."/>
            <person name="Shue B.C."/>
            <person name="Zheng X.H."/>
            <person name="Zhong F."/>
            <person name="Delcher A.L."/>
            <person name="Huson D.H."/>
            <person name="Kravitz S.A."/>
            <person name="Mouchard L."/>
            <person name="Reinert K."/>
            <person name="Remington K.A."/>
            <person name="Clark A.G."/>
            <person name="Waterman M.S."/>
            <person name="Eichler E.E."/>
            <person name="Adams M.D."/>
            <person name="Hunkapiller M.W."/>
            <person name="Myers E.W."/>
            <person name="Venter J.C."/>
        </authorList>
    </citation>
    <scope>NUCLEOTIDE SEQUENCE [LARGE SCALE GENOMIC DNA]</scope>
</reference>
<reference key="5">
    <citation type="journal article" date="2004" name="Genome Res.">
        <title>The status, quality, and expansion of the NIH full-length cDNA project: the Mammalian Gene Collection (MGC).</title>
        <authorList>
            <consortium name="The MGC Project Team"/>
        </authorList>
    </citation>
    <scope>NUCLEOTIDE SEQUENCE [LARGE SCALE MRNA]</scope>
    <source>
        <tissue>Uterus</tissue>
    </source>
</reference>
<reference key="6">
    <citation type="journal article" date="2012" name="Protein Cell">
        <title>Human Bop is a novel BH3-only member of the Bcl-2 protein family.</title>
        <authorList>
            <person name="Zhang X."/>
            <person name="Weng C."/>
            <person name="Li Y."/>
            <person name="Wang X."/>
            <person name="Jiang C."/>
            <person name="Li X."/>
            <person name="Xu Y."/>
            <person name="Chen Q."/>
            <person name="Pan L."/>
            <person name="Tang H."/>
        </authorList>
    </citation>
    <scope>SUBCELLULAR LOCATION</scope>
    <scope>TISSUE SPECIFICITY</scope>
    <scope>FUNCTION</scope>
    <scope>INTERACTION WITH VDAC1; BCL2; BCL2L1; MCL1; BCL2A1; BCL2L2; BAX AND BAK1</scope>
    <scope>MUTAGENESIS OF LEU-118; GLN-120; GLY-122 AND ASP-123</scope>
</reference>
<proteinExistence type="evidence at protein level"/>